<proteinExistence type="inferred from homology"/>
<name>TRPA_MYCA1</name>
<comment type="function">
    <text evidence="1">The alpha subunit is responsible for the aldol cleavage of indoleglycerol phosphate to indole and glyceraldehyde 3-phosphate.</text>
</comment>
<comment type="catalytic activity">
    <reaction evidence="1">
        <text>(1S,2R)-1-C-(indol-3-yl)glycerol 3-phosphate + L-serine = D-glyceraldehyde 3-phosphate + L-tryptophan + H2O</text>
        <dbReference type="Rhea" id="RHEA:10532"/>
        <dbReference type="ChEBI" id="CHEBI:15377"/>
        <dbReference type="ChEBI" id="CHEBI:33384"/>
        <dbReference type="ChEBI" id="CHEBI:57912"/>
        <dbReference type="ChEBI" id="CHEBI:58866"/>
        <dbReference type="ChEBI" id="CHEBI:59776"/>
        <dbReference type="EC" id="4.2.1.20"/>
    </reaction>
</comment>
<comment type="pathway">
    <text evidence="1">Amino-acid biosynthesis; L-tryptophan biosynthesis; L-tryptophan from chorismate: step 5/5.</text>
</comment>
<comment type="subunit">
    <text evidence="1">Tetramer of two alpha and two beta chains.</text>
</comment>
<comment type="similarity">
    <text evidence="1">Belongs to the TrpA family.</text>
</comment>
<sequence>MTVKQSQASRLGPIFEACRDDDRAALIGYLPTGYPDVPTSVQAMVALVESGCDIVEVGVPYSDPGMDGPTIARATEAALHGGVRVRDTLAAVEAISAAGGRAVVMTYWNPVLRYGVDAFARDLAAAGGYGLITPDLIPDEAGQWLAASERHGLDRIFLVAPSSTPQRLALTVEASRGFVYAASTMGVTGARDAVSHAAPELVSRVREISDIPVGVGLGVRSREQAAQIGGYADGVIVGSALVSALGDGGLTALRALTEELAAGVRQRAAAS</sequence>
<evidence type="ECO:0000255" key="1">
    <source>
        <dbReference type="HAMAP-Rule" id="MF_00131"/>
    </source>
</evidence>
<gene>
    <name evidence="1" type="primary">trpA</name>
    <name type="ordered locus">MAV_3173</name>
</gene>
<organism>
    <name type="scientific">Mycobacterium avium (strain 104)</name>
    <dbReference type="NCBI Taxonomy" id="243243"/>
    <lineage>
        <taxon>Bacteria</taxon>
        <taxon>Bacillati</taxon>
        <taxon>Actinomycetota</taxon>
        <taxon>Actinomycetes</taxon>
        <taxon>Mycobacteriales</taxon>
        <taxon>Mycobacteriaceae</taxon>
        <taxon>Mycobacterium</taxon>
        <taxon>Mycobacterium avium complex (MAC)</taxon>
    </lineage>
</organism>
<protein>
    <recommendedName>
        <fullName evidence="1">Tryptophan synthase alpha chain</fullName>
        <ecNumber evidence="1">4.2.1.20</ecNumber>
    </recommendedName>
</protein>
<dbReference type="EC" id="4.2.1.20" evidence="1"/>
<dbReference type="EMBL" id="CP000479">
    <property type="protein sequence ID" value="ABK67373.1"/>
    <property type="molecule type" value="Genomic_DNA"/>
</dbReference>
<dbReference type="RefSeq" id="WP_011725305.1">
    <property type="nucleotide sequence ID" value="NC_008595.1"/>
</dbReference>
<dbReference type="SMR" id="A0QHG8"/>
<dbReference type="GeneID" id="75270576"/>
<dbReference type="KEGG" id="mav:MAV_3173"/>
<dbReference type="HOGENOM" id="CLU_016734_0_0_11"/>
<dbReference type="UniPathway" id="UPA00035">
    <property type="reaction ID" value="UER00044"/>
</dbReference>
<dbReference type="Proteomes" id="UP000001574">
    <property type="component" value="Chromosome"/>
</dbReference>
<dbReference type="GO" id="GO:0005829">
    <property type="term" value="C:cytosol"/>
    <property type="evidence" value="ECO:0007669"/>
    <property type="project" value="TreeGrafter"/>
</dbReference>
<dbReference type="GO" id="GO:0004834">
    <property type="term" value="F:tryptophan synthase activity"/>
    <property type="evidence" value="ECO:0007669"/>
    <property type="project" value="UniProtKB-UniRule"/>
</dbReference>
<dbReference type="CDD" id="cd04724">
    <property type="entry name" value="Tryptophan_synthase_alpha"/>
    <property type="match status" value="1"/>
</dbReference>
<dbReference type="FunFam" id="3.20.20.70:FF:000037">
    <property type="entry name" value="Tryptophan synthase alpha chain"/>
    <property type="match status" value="1"/>
</dbReference>
<dbReference type="Gene3D" id="3.20.20.70">
    <property type="entry name" value="Aldolase class I"/>
    <property type="match status" value="1"/>
</dbReference>
<dbReference type="HAMAP" id="MF_00131">
    <property type="entry name" value="Trp_synth_alpha"/>
    <property type="match status" value="1"/>
</dbReference>
<dbReference type="InterPro" id="IPR013785">
    <property type="entry name" value="Aldolase_TIM"/>
</dbReference>
<dbReference type="InterPro" id="IPR011060">
    <property type="entry name" value="RibuloseP-bd_barrel"/>
</dbReference>
<dbReference type="InterPro" id="IPR018204">
    <property type="entry name" value="Trp_synthase_alpha_AS"/>
</dbReference>
<dbReference type="InterPro" id="IPR002028">
    <property type="entry name" value="Trp_synthase_suA"/>
</dbReference>
<dbReference type="NCBIfam" id="TIGR00262">
    <property type="entry name" value="trpA"/>
    <property type="match status" value="1"/>
</dbReference>
<dbReference type="PANTHER" id="PTHR43406:SF1">
    <property type="entry name" value="TRYPTOPHAN SYNTHASE ALPHA CHAIN, CHLOROPLASTIC"/>
    <property type="match status" value="1"/>
</dbReference>
<dbReference type="PANTHER" id="PTHR43406">
    <property type="entry name" value="TRYPTOPHAN SYNTHASE, ALPHA CHAIN"/>
    <property type="match status" value="1"/>
</dbReference>
<dbReference type="Pfam" id="PF00290">
    <property type="entry name" value="Trp_syntA"/>
    <property type="match status" value="1"/>
</dbReference>
<dbReference type="SUPFAM" id="SSF51366">
    <property type="entry name" value="Ribulose-phoshate binding barrel"/>
    <property type="match status" value="1"/>
</dbReference>
<dbReference type="PROSITE" id="PS00167">
    <property type="entry name" value="TRP_SYNTHASE_ALPHA"/>
    <property type="match status" value="1"/>
</dbReference>
<reference key="1">
    <citation type="submission" date="2006-10" db="EMBL/GenBank/DDBJ databases">
        <authorList>
            <person name="Fleischmann R.D."/>
            <person name="Dodson R.J."/>
            <person name="Haft D.H."/>
            <person name="Merkel J.S."/>
            <person name="Nelson W.C."/>
            <person name="Fraser C.M."/>
        </authorList>
    </citation>
    <scope>NUCLEOTIDE SEQUENCE [LARGE SCALE GENOMIC DNA]</scope>
    <source>
        <strain>104</strain>
    </source>
</reference>
<keyword id="KW-0028">Amino-acid biosynthesis</keyword>
<keyword id="KW-0057">Aromatic amino acid biosynthesis</keyword>
<keyword id="KW-0456">Lyase</keyword>
<keyword id="KW-0822">Tryptophan biosynthesis</keyword>
<feature type="chain" id="PRO_1000018232" description="Tryptophan synthase alpha chain">
    <location>
        <begin position="1"/>
        <end position="271"/>
    </location>
</feature>
<feature type="active site" description="Proton acceptor" evidence="1">
    <location>
        <position position="56"/>
    </location>
</feature>
<feature type="active site" description="Proton acceptor" evidence="1">
    <location>
        <position position="67"/>
    </location>
</feature>
<accession>A0QHG8</accession>